<name>GATZ_SALA4</name>
<organism>
    <name type="scientific">Salmonella agona (strain SL483)</name>
    <dbReference type="NCBI Taxonomy" id="454166"/>
    <lineage>
        <taxon>Bacteria</taxon>
        <taxon>Pseudomonadati</taxon>
        <taxon>Pseudomonadota</taxon>
        <taxon>Gammaproteobacteria</taxon>
        <taxon>Enterobacterales</taxon>
        <taxon>Enterobacteriaceae</taxon>
        <taxon>Salmonella</taxon>
    </lineage>
</organism>
<protein>
    <recommendedName>
        <fullName evidence="1">D-tagatose-1,6-bisphosphate aldolase subunit GatZ</fullName>
    </recommendedName>
</protein>
<keyword id="KW-0298">Galactitol metabolism</keyword>
<evidence type="ECO:0000255" key="1">
    <source>
        <dbReference type="HAMAP-Rule" id="MF_01296"/>
    </source>
</evidence>
<evidence type="ECO:0000305" key="2"/>
<proteinExistence type="inferred from homology"/>
<reference key="1">
    <citation type="journal article" date="2011" name="J. Bacteriol.">
        <title>Comparative genomics of 28 Salmonella enterica isolates: evidence for CRISPR-mediated adaptive sublineage evolution.</title>
        <authorList>
            <person name="Fricke W.F."/>
            <person name="Mammel M.K."/>
            <person name="McDermott P.F."/>
            <person name="Tartera C."/>
            <person name="White D.G."/>
            <person name="Leclerc J.E."/>
            <person name="Ravel J."/>
            <person name="Cebula T.A."/>
        </authorList>
    </citation>
    <scope>NUCLEOTIDE SEQUENCE [LARGE SCALE GENOMIC DNA]</scope>
    <source>
        <strain>SL483</strain>
    </source>
</reference>
<comment type="function">
    <text evidence="1">Component of the tagatose-1,6-bisphosphate aldolase GatYZ that is required for full activity and stability of the Y subunit. Could have a chaperone-like function for the proper and stable folding of GatY. When expressed alone, GatZ does not show any aldolase activity. Is involved in the catabolism of galactitol.</text>
</comment>
<comment type="pathway">
    <text evidence="1">Carbohydrate metabolism; D-tagatose 6-phosphate degradation; D-glyceraldehyde 3-phosphate and glycerone phosphate from D-tagatose 6-phosphate: step 2/2.</text>
</comment>
<comment type="subunit">
    <text evidence="1">Forms a complex with GatY.</text>
</comment>
<comment type="similarity">
    <text evidence="1">Belongs to the GatZ/KbaZ family. GatZ subfamily.</text>
</comment>
<comment type="sequence caution" evidence="2">
    <conflict type="erroneous initiation">
        <sequence resource="EMBL-CDS" id="ACH52684"/>
    </conflict>
</comment>
<gene>
    <name evidence="1" type="primary">gatZ</name>
    <name type="ordered locus">SeAg_B3444</name>
</gene>
<sequence>MKEIISRHKAGEQIGICSVCSAHPLVIESALRFDLNSGNKVLIEATSNQVNQFGGYTGMKPADFRDFVYGIAQEVGFPRERLILGGDHLGPNCWQNEPAAAAMEKSVELIKAYVVAGFSKIHLDASMSCADDPTPLDPMVVARRAAVLCKAAEETANEEQKCHLTYVIGTEVPVPGGEASTIGSVHVTREVDAARTLETHQIAFRESGLEEALSRVIAIVVQPGVEFDHTQIIHYQPQAAQALSAWIKETPMVYEAHSTDYQTRQAYRALVRDHYAILKVGPALTFALREAIFALAQMENELISPEQRSRVLEVIDEVMLNEPGYWKKYYRPTWSQAMVDIHFSLSDRIRYYWPHPRIRQSVEKLIANLNNVTLPLGLISQFMPVQFERLSEGVLTPTPHNLIIDKIQDVLRAYRFGCTPDVA</sequence>
<accession>B5F6R0</accession>
<feature type="chain" id="PRO_0000372507" description="D-tagatose-1,6-bisphosphate aldolase subunit GatZ">
    <location>
        <begin position="1"/>
        <end position="423"/>
    </location>
</feature>
<dbReference type="EMBL" id="CP001138">
    <property type="protein sequence ID" value="ACH52684.1"/>
    <property type="status" value="ALT_INIT"/>
    <property type="molecule type" value="Genomic_DNA"/>
</dbReference>
<dbReference type="RefSeq" id="WP_001747713.1">
    <property type="nucleotide sequence ID" value="NC_011149.1"/>
</dbReference>
<dbReference type="SMR" id="B5F6R0"/>
<dbReference type="KEGG" id="sea:SeAg_B3444"/>
<dbReference type="HOGENOM" id="CLU_053334_0_0_6"/>
<dbReference type="UniPathway" id="UPA00704">
    <property type="reaction ID" value="UER00716"/>
</dbReference>
<dbReference type="Proteomes" id="UP000008819">
    <property type="component" value="Chromosome"/>
</dbReference>
<dbReference type="GO" id="GO:0005886">
    <property type="term" value="C:plasma membrane"/>
    <property type="evidence" value="ECO:0007669"/>
    <property type="project" value="TreeGrafter"/>
</dbReference>
<dbReference type="GO" id="GO:2001059">
    <property type="term" value="P:D-tagatose 6-phosphate catabolic process"/>
    <property type="evidence" value="ECO:0007669"/>
    <property type="project" value="UniProtKB-UniRule"/>
</dbReference>
<dbReference type="GO" id="GO:0019402">
    <property type="term" value="P:galactitol metabolic process"/>
    <property type="evidence" value="ECO:0007669"/>
    <property type="project" value="UniProtKB-KW"/>
</dbReference>
<dbReference type="GO" id="GO:0009401">
    <property type="term" value="P:phosphoenolpyruvate-dependent sugar phosphotransferase system"/>
    <property type="evidence" value="ECO:0007669"/>
    <property type="project" value="TreeGrafter"/>
</dbReference>
<dbReference type="FunFam" id="1.10.400.20:FF:000001">
    <property type="entry name" value="D-tagatose-1,6-bisphosphate aldolase subunit GatZ"/>
    <property type="match status" value="1"/>
</dbReference>
<dbReference type="FunFam" id="3.20.20.70:FF:000141">
    <property type="entry name" value="D-tagatose-1,6-bisphosphate aldolase subunit GatZ"/>
    <property type="match status" value="1"/>
</dbReference>
<dbReference type="Gene3D" id="3.20.20.70">
    <property type="entry name" value="Aldolase class I"/>
    <property type="match status" value="1"/>
</dbReference>
<dbReference type="Gene3D" id="1.10.400.20">
    <property type="entry name" value="putative tagatose 6-phosphate kinase domain like"/>
    <property type="match status" value="1"/>
</dbReference>
<dbReference type="HAMAP" id="MF_01296">
    <property type="entry name" value="Tagatose_aldol_GatZ"/>
    <property type="match status" value="1"/>
</dbReference>
<dbReference type="InterPro" id="IPR013785">
    <property type="entry name" value="Aldolase_TIM"/>
</dbReference>
<dbReference type="InterPro" id="IPR012062">
    <property type="entry name" value="GatZ/KbaZ-like"/>
</dbReference>
<dbReference type="InterPro" id="IPR050303">
    <property type="entry name" value="GatZ_KbaZ_carbometab"/>
</dbReference>
<dbReference type="InterPro" id="IPR023436">
    <property type="entry name" value="TagBP_ald_GatZ"/>
</dbReference>
<dbReference type="NCBIfam" id="TIGR02810">
    <property type="entry name" value="agaZ_gatZ"/>
    <property type="match status" value="1"/>
</dbReference>
<dbReference type="NCBIfam" id="NF011626">
    <property type="entry name" value="PRK15052.1"/>
    <property type="match status" value="1"/>
</dbReference>
<dbReference type="PANTHER" id="PTHR32502:SF12">
    <property type="entry name" value="D-TAGATOSE-1,6-BISPHOSPHATE ALDOLASE SUBUNIT GATZ"/>
    <property type="match status" value="1"/>
</dbReference>
<dbReference type="PANTHER" id="PTHR32502">
    <property type="entry name" value="N-ACETYLGALACTOSAMINE PERMEASE II COMPONENT-RELATED"/>
    <property type="match status" value="1"/>
</dbReference>
<dbReference type="Pfam" id="PF08013">
    <property type="entry name" value="GatZ_KbaZ-like"/>
    <property type="match status" value="1"/>
</dbReference>
<dbReference type="PIRSF" id="PIRSF009264">
    <property type="entry name" value="TagBP_ald_AgaZ"/>
    <property type="match status" value="1"/>
</dbReference>
<dbReference type="SUPFAM" id="SSF51569">
    <property type="entry name" value="Aldolase"/>
    <property type="match status" value="1"/>
</dbReference>